<organism>
    <name type="scientific">Enterococcus faecalis (strain ATCC 700802 / V583)</name>
    <dbReference type="NCBI Taxonomy" id="226185"/>
    <lineage>
        <taxon>Bacteria</taxon>
        <taxon>Bacillati</taxon>
        <taxon>Bacillota</taxon>
        <taxon>Bacilli</taxon>
        <taxon>Lactobacillales</taxon>
        <taxon>Enterococcaceae</taxon>
        <taxon>Enterococcus</taxon>
    </lineage>
</organism>
<accession>Q831K9</accession>
<gene>
    <name evidence="1" type="primary">uppS</name>
    <name type="ordered locus">EF_2495</name>
</gene>
<dbReference type="EC" id="2.5.1.-" evidence="1"/>
<dbReference type="EMBL" id="AE016830">
    <property type="protein sequence ID" value="AAO82211.1"/>
    <property type="molecule type" value="Genomic_DNA"/>
</dbReference>
<dbReference type="RefSeq" id="NP_816141.1">
    <property type="nucleotide sequence ID" value="NC_004668.1"/>
</dbReference>
<dbReference type="RefSeq" id="WP_002362225.1">
    <property type="nucleotide sequence ID" value="NZ_KE136528.1"/>
</dbReference>
<dbReference type="PDB" id="6LOI">
    <property type="method" value="X-ray"/>
    <property type="resolution" value="2.50 A"/>
    <property type="chains" value="A/B/C/D/E/F=1-271"/>
</dbReference>
<dbReference type="PDBsum" id="6LOI"/>
<dbReference type="SMR" id="Q831K9"/>
<dbReference type="STRING" id="226185.EF_2495"/>
<dbReference type="EnsemblBacteria" id="AAO82211">
    <property type="protein sequence ID" value="AAO82211"/>
    <property type="gene ID" value="EF_2495"/>
</dbReference>
<dbReference type="KEGG" id="efa:EF2495"/>
<dbReference type="PATRIC" id="fig|226185.45.peg.1053"/>
<dbReference type="eggNOG" id="COG0020">
    <property type="taxonomic scope" value="Bacteria"/>
</dbReference>
<dbReference type="HOGENOM" id="CLU_038505_1_1_9"/>
<dbReference type="Proteomes" id="UP000001415">
    <property type="component" value="Chromosome"/>
</dbReference>
<dbReference type="GO" id="GO:0005829">
    <property type="term" value="C:cytosol"/>
    <property type="evidence" value="ECO:0007669"/>
    <property type="project" value="TreeGrafter"/>
</dbReference>
<dbReference type="GO" id="GO:0008834">
    <property type="term" value="F:ditrans,polycis-undecaprenyl-diphosphate synthase [(2E,6E)-farnesyl-diphosphate specific] activity"/>
    <property type="evidence" value="ECO:0007669"/>
    <property type="project" value="TreeGrafter"/>
</dbReference>
<dbReference type="GO" id="GO:0000287">
    <property type="term" value="F:magnesium ion binding"/>
    <property type="evidence" value="ECO:0007669"/>
    <property type="project" value="UniProtKB-UniRule"/>
</dbReference>
<dbReference type="GO" id="GO:0030145">
    <property type="term" value="F:manganese ion binding"/>
    <property type="evidence" value="ECO:0007669"/>
    <property type="project" value="TreeGrafter"/>
</dbReference>
<dbReference type="GO" id="GO:0016094">
    <property type="term" value="P:polyprenol biosynthetic process"/>
    <property type="evidence" value="ECO:0007669"/>
    <property type="project" value="TreeGrafter"/>
</dbReference>
<dbReference type="CDD" id="cd00475">
    <property type="entry name" value="Cis_IPPS"/>
    <property type="match status" value="1"/>
</dbReference>
<dbReference type="FunFam" id="3.40.1180.10:FF:000001">
    <property type="entry name" value="(2E,6E)-farnesyl-diphosphate-specific ditrans,polycis-undecaprenyl-diphosphate synthase"/>
    <property type="match status" value="1"/>
</dbReference>
<dbReference type="Gene3D" id="3.40.1180.10">
    <property type="entry name" value="Decaprenyl diphosphate synthase-like"/>
    <property type="match status" value="1"/>
</dbReference>
<dbReference type="HAMAP" id="MF_01139">
    <property type="entry name" value="ISPT"/>
    <property type="match status" value="1"/>
</dbReference>
<dbReference type="InterPro" id="IPR001441">
    <property type="entry name" value="UPP_synth-like"/>
</dbReference>
<dbReference type="InterPro" id="IPR018520">
    <property type="entry name" value="UPP_synth-like_CS"/>
</dbReference>
<dbReference type="InterPro" id="IPR036424">
    <property type="entry name" value="UPP_synth-like_sf"/>
</dbReference>
<dbReference type="NCBIfam" id="NF011405">
    <property type="entry name" value="PRK14830.1"/>
    <property type="match status" value="1"/>
</dbReference>
<dbReference type="NCBIfam" id="TIGR00055">
    <property type="entry name" value="uppS"/>
    <property type="match status" value="1"/>
</dbReference>
<dbReference type="PANTHER" id="PTHR10291:SF0">
    <property type="entry name" value="DEHYDRODOLICHYL DIPHOSPHATE SYNTHASE 2"/>
    <property type="match status" value="1"/>
</dbReference>
<dbReference type="PANTHER" id="PTHR10291">
    <property type="entry name" value="DEHYDRODOLICHYL DIPHOSPHATE SYNTHASE FAMILY MEMBER"/>
    <property type="match status" value="1"/>
</dbReference>
<dbReference type="Pfam" id="PF01255">
    <property type="entry name" value="Prenyltransf"/>
    <property type="match status" value="1"/>
</dbReference>
<dbReference type="SUPFAM" id="SSF64005">
    <property type="entry name" value="Undecaprenyl diphosphate synthase"/>
    <property type="match status" value="1"/>
</dbReference>
<dbReference type="PROSITE" id="PS01066">
    <property type="entry name" value="UPP_SYNTHASE"/>
    <property type="match status" value="1"/>
</dbReference>
<protein>
    <recommendedName>
        <fullName evidence="1">Isoprenyl transferase</fullName>
        <ecNumber evidence="1">2.5.1.-</ecNumber>
    </recommendedName>
</protein>
<keyword id="KW-0002">3D-structure</keyword>
<keyword id="KW-0460">Magnesium</keyword>
<keyword id="KW-0479">Metal-binding</keyword>
<keyword id="KW-1185">Reference proteome</keyword>
<keyword id="KW-0808">Transferase</keyword>
<proteinExistence type="evidence at protein level"/>
<comment type="function">
    <text evidence="1">Catalyzes the condensation of isopentenyl diphosphate (IPP) with allylic pyrophosphates generating different type of terpenoids.</text>
</comment>
<comment type="cofactor">
    <cofactor evidence="1">
        <name>Mg(2+)</name>
        <dbReference type="ChEBI" id="CHEBI:18420"/>
    </cofactor>
    <text evidence="1">Binds 2 magnesium ions per subunit.</text>
</comment>
<comment type="subunit">
    <text evidence="1">Homodimer.</text>
</comment>
<comment type="similarity">
    <text evidence="1">Belongs to the UPP synthase family.</text>
</comment>
<feature type="chain" id="PRO_0000123612" description="Isoprenyl transferase">
    <location>
        <begin position="1"/>
        <end position="271"/>
    </location>
</feature>
<feature type="active site" evidence="1">
    <location>
        <position position="35"/>
    </location>
</feature>
<feature type="active site" description="Proton acceptor" evidence="1">
    <location>
        <position position="83"/>
    </location>
</feature>
<feature type="binding site" evidence="1">
    <location>
        <position position="35"/>
    </location>
    <ligand>
        <name>Mg(2+)</name>
        <dbReference type="ChEBI" id="CHEBI:18420"/>
    </ligand>
</feature>
<feature type="binding site" evidence="1">
    <location>
        <begin position="36"/>
        <end position="39"/>
    </location>
    <ligand>
        <name>substrate</name>
    </ligand>
</feature>
<feature type="binding site" evidence="1">
    <location>
        <position position="40"/>
    </location>
    <ligand>
        <name>substrate</name>
    </ligand>
</feature>
<feature type="binding site" evidence="1">
    <location>
        <position position="48"/>
    </location>
    <ligand>
        <name>substrate</name>
    </ligand>
</feature>
<feature type="binding site" evidence="1">
    <location>
        <position position="52"/>
    </location>
    <ligand>
        <name>substrate</name>
    </ligand>
</feature>
<feature type="binding site" evidence="1">
    <location>
        <begin position="80"/>
        <end position="82"/>
    </location>
    <ligand>
        <name>substrate</name>
    </ligand>
</feature>
<feature type="binding site" evidence="1">
    <location>
        <position position="84"/>
    </location>
    <ligand>
        <name>substrate</name>
    </ligand>
</feature>
<feature type="binding site" evidence="1">
    <location>
        <position position="86"/>
    </location>
    <ligand>
        <name>substrate</name>
    </ligand>
</feature>
<feature type="binding site" evidence="1">
    <location>
        <position position="207"/>
    </location>
    <ligand>
        <name>substrate</name>
    </ligand>
</feature>
<feature type="binding site" evidence="1">
    <location>
        <begin position="213"/>
        <end position="215"/>
    </location>
    <ligand>
        <name>substrate</name>
    </ligand>
</feature>
<feature type="binding site" evidence="1">
    <location>
        <position position="226"/>
    </location>
    <ligand>
        <name>Mg(2+)</name>
        <dbReference type="ChEBI" id="CHEBI:18420"/>
    </ligand>
</feature>
<feature type="strand" evidence="2">
    <location>
        <begin position="28"/>
        <end position="34"/>
    </location>
</feature>
<feature type="helix" evidence="2">
    <location>
        <begin position="37"/>
        <end position="43"/>
    </location>
</feature>
<feature type="helix" evidence="2">
    <location>
        <begin position="48"/>
        <end position="69"/>
    </location>
</feature>
<feature type="strand" evidence="2">
    <location>
        <begin position="72"/>
        <end position="78"/>
    </location>
</feature>
<feature type="strand" evidence="2">
    <location>
        <begin position="84"/>
        <end position="86"/>
    </location>
</feature>
<feature type="helix" evidence="2">
    <location>
        <begin position="101"/>
        <end position="111"/>
    </location>
</feature>
<feature type="strand" evidence="2">
    <location>
        <begin position="115"/>
        <end position="120"/>
    </location>
</feature>
<feature type="helix" evidence="2">
    <location>
        <begin position="122"/>
        <end position="124"/>
    </location>
</feature>
<feature type="helix" evidence="2">
    <location>
        <begin position="127"/>
        <end position="139"/>
    </location>
</feature>
<feature type="turn" evidence="2">
    <location>
        <begin position="140"/>
        <end position="142"/>
    </location>
</feature>
<feature type="strand" evidence="2">
    <location>
        <begin position="147"/>
        <end position="153"/>
    </location>
</feature>
<feature type="helix" evidence="2">
    <location>
        <begin position="156"/>
        <end position="172"/>
    </location>
</feature>
<feature type="strand" evidence="2">
    <location>
        <begin position="178"/>
        <end position="180"/>
    </location>
</feature>
<feature type="helix" evidence="2">
    <location>
        <begin position="183"/>
        <end position="188"/>
    </location>
</feature>
<feature type="turn" evidence="2">
    <location>
        <begin position="191"/>
        <end position="194"/>
    </location>
</feature>
<feature type="helix" evidence="2">
    <location>
        <begin position="197"/>
        <end position="199"/>
    </location>
</feature>
<feature type="strand" evidence="2">
    <location>
        <begin position="203"/>
        <end position="207"/>
    </location>
</feature>
<feature type="strand" evidence="2">
    <location>
        <begin position="216"/>
        <end position="218"/>
    </location>
</feature>
<feature type="helix" evidence="2">
    <location>
        <begin position="221"/>
        <end position="223"/>
    </location>
</feature>
<feature type="strand" evidence="2">
    <location>
        <begin position="226"/>
        <end position="229"/>
    </location>
</feature>
<feature type="helix" evidence="2">
    <location>
        <begin position="234"/>
        <end position="236"/>
    </location>
</feature>
<feature type="helix" evidence="2">
    <location>
        <begin position="239"/>
        <end position="249"/>
    </location>
</feature>
<evidence type="ECO:0000255" key="1">
    <source>
        <dbReference type="HAMAP-Rule" id="MF_01139"/>
    </source>
</evidence>
<evidence type="ECO:0007829" key="2">
    <source>
        <dbReference type="PDB" id="6LOI"/>
    </source>
</evidence>
<reference key="1">
    <citation type="journal article" date="2003" name="Science">
        <title>Role of mobile DNA in the evolution of vancomycin-resistant Enterococcus faecalis.</title>
        <authorList>
            <person name="Paulsen I.T."/>
            <person name="Banerjei L."/>
            <person name="Myers G.S.A."/>
            <person name="Nelson K.E."/>
            <person name="Seshadri R."/>
            <person name="Read T.D."/>
            <person name="Fouts D.E."/>
            <person name="Eisen J.A."/>
            <person name="Gill S.R."/>
            <person name="Heidelberg J.F."/>
            <person name="Tettelin H."/>
            <person name="Dodson R.J."/>
            <person name="Umayam L.A."/>
            <person name="Brinkac L.M."/>
            <person name="Beanan M.J."/>
            <person name="Daugherty S.C."/>
            <person name="DeBoy R.T."/>
            <person name="Durkin S.A."/>
            <person name="Kolonay J.F."/>
            <person name="Madupu R."/>
            <person name="Nelson W.C."/>
            <person name="Vamathevan J.J."/>
            <person name="Tran B."/>
            <person name="Upton J."/>
            <person name="Hansen T."/>
            <person name="Shetty J."/>
            <person name="Khouri H.M."/>
            <person name="Utterback T.R."/>
            <person name="Radune D."/>
            <person name="Ketchum K.A."/>
            <person name="Dougherty B.A."/>
            <person name="Fraser C.M."/>
        </authorList>
    </citation>
    <scope>NUCLEOTIDE SEQUENCE [LARGE SCALE GENOMIC DNA]</scope>
    <source>
        <strain>ATCC 700802 / V583</strain>
    </source>
</reference>
<sequence length="271" mass="31005">MLRFFPQKNKYVEEASQYAFDKEGQIPQHIAIIMDGNGRWAQNRRLPRIAGHKEGMDTVKKITKHASHLGVKVLTLYAFSTENWKRPTDEVNFLMQLPVDFFDTFVPELIKENVKVNVMGYQEFLPSHTQDAVKRAIEQTKDNTGMVLNFALNYGARAELLTAMKQIAAEVSEKAYTADEITEETIADHLMTGFLPTELRDPELLIRTSGEERISNFLLWQIAYSELFFTKALWPDFSGDTLETAIASFQNRNRRFGGLKETTETEGSDPQ</sequence>
<name>ISPT_ENTFA</name>